<accession>C1KWM9</accession>
<comment type="function">
    <text evidence="1">Major role in the synthesis of nucleoside triphosphates other than ATP. The ATP gamma phosphate is transferred to the NDP beta phosphate via a ping-pong mechanism, using a phosphorylated active-site intermediate.</text>
</comment>
<comment type="catalytic activity">
    <reaction evidence="1">
        <text>a 2'-deoxyribonucleoside 5'-diphosphate + ATP = a 2'-deoxyribonucleoside 5'-triphosphate + ADP</text>
        <dbReference type="Rhea" id="RHEA:44640"/>
        <dbReference type="ChEBI" id="CHEBI:30616"/>
        <dbReference type="ChEBI" id="CHEBI:61560"/>
        <dbReference type="ChEBI" id="CHEBI:73316"/>
        <dbReference type="ChEBI" id="CHEBI:456216"/>
        <dbReference type="EC" id="2.7.4.6"/>
    </reaction>
</comment>
<comment type="catalytic activity">
    <reaction evidence="1">
        <text>a ribonucleoside 5'-diphosphate + ATP = a ribonucleoside 5'-triphosphate + ADP</text>
        <dbReference type="Rhea" id="RHEA:18113"/>
        <dbReference type="ChEBI" id="CHEBI:30616"/>
        <dbReference type="ChEBI" id="CHEBI:57930"/>
        <dbReference type="ChEBI" id="CHEBI:61557"/>
        <dbReference type="ChEBI" id="CHEBI:456216"/>
        <dbReference type="EC" id="2.7.4.6"/>
    </reaction>
</comment>
<comment type="cofactor">
    <cofactor evidence="1">
        <name>Mg(2+)</name>
        <dbReference type="ChEBI" id="CHEBI:18420"/>
    </cofactor>
</comment>
<comment type="subunit">
    <text evidence="1">Homotetramer.</text>
</comment>
<comment type="subcellular location">
    <subcellularLocation>
        <location evidence="1">Cytoplasm</location>
    </subcellularLocation>
</comment>
<comment type="similarity">
    <text evidence="1">Belongs to the NDK family.</text>
</comment>
<keyword id="KW-0067">ATP-binding</keyword>
<keyword id="KW-0963">Cytoplasm</keyword>
<keyword id="KW-0418">Kinase</keyword>
<keyword id="KW-0460">Magnesium</keyword>
<keyword id="KW-0479">Metal-binding</keyword>
<keyword id="KW-0546">Nucleotide metabolism</keyword>
<keyword id="KW-0547">Nucleotide-binding</keyword>
<keyword id="KW-0597">Phosphoprotein</keyword>
<keyword id="KW-0808">Transferase</keyword>
<evidence type="ECO:0000255" key="1">
    <source>
        <dbReference type="HAMAP-Rule" id="MF_00451"/>
    </source>
</evidence>
<gene>
    <name evidence="1" type="primary">ndk</name>
    <name type="ordered locus">Lm4b_01946</name>
</gene>
<protein>
    <recommendedName>
        <fullName evidence="1">Nucleoside diphosphate kinase</fullName>
        <shortName evidence="1">NDK</shortName>
        <shortName evidence="1">NDP kinase</shortName>
        <ecNumber evidence="1">2.7.4.6</ecNumber>
    </recommendedName>
    <alternativeName>
        <fullName evidence="1">Nucleoside-2-P kinase</fullName>
    </alternativeName>
</protein>
<proteinExistence type="inferred from homology"/>
<dbReference type="EC" id="2.7.4.6" evidence="1"/>
<dbReference type="EMBL" id="FM242711">
    <property type="protein sequence ID" value="CAS05704.1"/>
    <property type="molecule type" value="Genomic_DNA"/>
</dbReference>
<dbReference type="RefSeq" id="WP_003727999.1">
    <property type="nucleotide sequence ID" value="NC_012488.1"/>
</dbReference>
<dbReference type="SMR" id="C1KWM9"/>
<dbReference type="KEGG" id="lmc:Lm4b_01946"/>
<dbReference type="HOGENOM" id="CLU_060216_6_3_9"/>
<dbReference type="GO" id="GO:0005737">
    <property type="term" value="C:cytoplasm"/>
    <property type="evidence" value="ECO:0007669"/>
    <property type="project" value="UniProtKB-SubCell"/>
</dbReference>
<dbReference type="GO" id="GO:0005524">
    <property type="term" value="F:ATP binding"/>
    <property type="evidence" value="ECO:0007669"/>
    <property type="project" value="UniProtKB-UniRule"/>
</dbReference>
<dbReference type="GO" id="GO:0046872">
    <property type="term" value="F:metal ion binding"/>
    <property type="evidence" value="ECO:0007669"/>
    <property type="project" value="UniProtKB-KW"/>
</dbReference>
<dbReference type="GO" id="GO:0004550">
    <property type="term" value="F:nucleoside diphosphate kinase activity"/>
    <property type="evidence" value="ECO:0007669"/>
    <property type="project" value="UniProtKB-UniRule"/>
</dbReference>
<dbReference type="GO" id="GO:0006241">
    <property type="term" value="P:CTP biosynthetic process"/>
    <property type="evidence" value="ECO:0007669"/>
    <property type="project" value="UniProtKB-UniRule"/>
</dbReference>
<dbReference type="GO" id="GO:0006183">
    <property type="term" value="P:GTP biosynthetic process"/>
    <property type="evidence" value="ECO:0007669"/>
    <property type="project" value="UniProtKB-UniRule"/>
</dbReference>
<dbReference type="GO" id="GO:0006228">
    <property type="term" value="P:UTP biosynthetic process"/>
    <property type="evidence" value="ECO:0007669"/>
    <property type="project" value="UniProtKB-UniRule"/>
</dbReference>
<dbReference type="CDD" id="cd04413">
    <property type="entry name" value="NDPk_I"/>
    <property type="match status" value="1"/>
</dbReference>
<dbReference type="FunFam" id="3.30.70.141:FF:000003">
    <property type="entry name" value="Nucleoside diphosphate kinase"/>
    <property type="match status" value="1"/>
</dbReference>
<dbReference type="Gene3D" id="3.30.70.141">
    <property type="entry name" value="Nucleoside diphosphate kinase-like domain"/>
    <property type="match status" value="1"/>
</dbReference>
<dbReference type="HAMAP" id="MF_00451">
    <property type="entry name" value="NDP_kinase"/>
    <property type="match status" value="1"/>
</dbReference>
<dbReference type="InterPro" id="IPR034907">
    <property type="entry name" value="NDK-like_dom"/>
</dbReference>
<dbReference type="InterPro" id="IPR036850">
    <property type="entry name" value="NDK-like_dom_sf"/>
</dbReference>
<dbReference type="InterPro" id="IPR001564">
    <property type="entry name" value="Nucleoside_diP_kinase"/>
</dbReference>
<dbReference type="InterPro" id="IPR023005">
    <property type="entry name" value="Nucleoside_diP_kinase_AS"/>
</dbReference>
<dbReference type="NCBIfam" id="NF001908">
    <property type="entry name" value="PRK00668.1"/>
    <property type="match status" value="1"/>
</dbReference>
<dbReference type="PANTHER" id="PTHR11349">
    <property type="entry name" value="NUCLEOSIDE DIPHOSPHATE KINASE"/>
    <property type="match status" value="1"/>
</dbReference>
<dbReference type="Pfam" id="PF00334">
    <property type="entry name" value="NDK"/>
    <property type="match status" value="1"/>
</dbReference>
<dbReference type="PRINTS" id="PR01243">
    <property type="entry name" value="NUCDPKINASE"/>
</dbReference>
<dbReference type="SMART" id="SM00562">
    <property type="entry name" value="NDK"/>
    <property type="match status" value="1"/>
</dbReference>
<dbReference type="SUPFAM" id="SSF54919">
    <property type="entry name" value="Nucleoside diphosphate kinase, NDK"/>
    <property type="match status" value="1"/>
</dbReference>
<dbReference type="PROSITE" id="PS00469">
    <property type="entry name" value="NDPK"/>
    <property type="match status" value="1"/>
</dbReference>
<dbReference type="PROSITE" id="PS51374">
    <property type="entry name" value="NDPK_LIKE"/>
    <property type="match status" value="1"/>
</dbReference>
<feature type="chain" id="PRO_1000206216" description="Nucleoside diphosphate kinase">
    <location>
        <begin position="1"/>
        <end position="147"/>
    </location>
</feature>
<feature type="active site" description="Pros-phosphohistidine intermediate" evidence="1">
    <location>
        <position position="115"/>
    </location>
</feature>
<feature type="binding site" evidence="1">
    <location>
        <position position="9"/>
    </location>
    <ligand>
        <name>ATP</name>
        <dbReference type="ChEBI" id="CHEBI:30616"/>
    </ligand>
</feature>
<feature type="binding site" evidence="1">
    <location>
        <position position="57"/>
    </location>
    <ligand>
        <name>ATP</name>
        <dbReference type="ChEBI" id="CHEBI:30616"/>
    </ligand>
</feature>
<feature type="binding site" evidence="1">
    <location>
        <position position="85"/>
    </location>
    <ligand>
        <name>ATP</name>
        <dbReference type="ChEBI" id="CHEBI:30616"/>
    </ligand>
</feature>
<feature type="binding site" evidence="1">
    <location>
        <position position="91"/>
    </location>
    <ligand>
        <name>ATP</name>
        <dbReference type="ChEBI" id="CHEBI:30616"/>
    </ligand>
</feature>
<feature type="binding site" evidence="1">
    <location>
        <position position="102"/>
    </location>
    <ligand>
        <name>ATP</name>
        <dbReference type="ChEBI" id="CHEBI:30616"/>
    </ligand>
</feature>
<feature type="binding site" evidence="1">
    <location>
        <position position="112"/>
    </location>
    <ligand>
        <name>ATP</name>
        <dbReference type="ChEBI" id="CHEBI:30616"/>
    </ligand>
</feature>
<sequence length="147" mass="16435">MEQTYVMVKPDGVERGLIGEIVTRIEKKGLKIVAGKLMQIDRELAEKHYAEHIGKSFFEDLIGFITSGPVFAMVLEGDDAIATARRMMGKTNPLEADPGTIRADYAVHTNRNVIHGSDSPESAKREIQLFFAPQEILSYQKAIDTWI</sequence>
<name>NDK_LISMC</name>
<organism>
    <name type="scientific">Listeria monocytogenes serotype 4b (strain CLIP80459)</name>
    <dbReference type="NCBI Taxonomy" id="568819"/>
    <lineage>
        <taxon>Bacteria</taxon>
        <taxon>Bacillati</taxon>
        <taxon>Bacillota</taxon>
        <taxon>Bacilli</taxon>
        <taxon>Bacillales</taxon>
        <taxon>Listeriaceae</taxon>
        <taxon>Listeria</taxon>
    </lineage>
</organism>
<reference key="1">
    <citation type="journal article" date="2012" name="BMC Genomics">
        <title>Comparative genomics and transcriptomics of lineages I, II, and III strains of Listeria monocytogenes.</title>
        <authorList>
            <person name="Hain T."/>
            <person name="Ghai R."/>
            <person name="Billion A."/>
            <person name="Kuenne C.T."/>
            <person name="Steinweg C."/>
            <person name="Izar B."/>
            <person name="Mohamed W."/>
            <person name="Mraheil M."/>
            <person name="Domann E."/>
            <person name="Schaffrath S."/>
            <person name="Karst U."/>
            <person name="Goesmann A."/>
            <person name="Oehm S."/>
            <person name="Puhler A."/>
            <person name="Merkl R."/>
            <person name="Vorwerk S."/>
            <person name="Glaser P."/>
            <person name="Garrido P."/>
            <person name="Rusniok C."/>
            <person name="Buchrieser C."/>
            <person name="Goebel W."/>
            <person name="Chakraborty T."/>
        </authorList>
    </citation>
    <scope>NUCLEOTIDE SEQUENCE [LARGE SCALE GENOMIC DNA]</scope>
    <source>
        <strain>CLIP80459</strain>
    </source>
</reference>